<comment type="function">
    <text evidence="1 2">Compacts the host nucleoid (PubMed:34365505). Probably dysregulates hundreds of host genes including derepression of most of the H-NS regulon (PubMed:34365505). Plays a role in the transcriptional regulation of middle promoters (PubMed:3880747).</text>
</comment>
<comment type="subunit">
    <text evidence="1">Monomer (PubMed:34365505). Homodimer (PubMed:34365505).</text>
</comment>
<keyword id="KW-1185">Reference proteome</keyword>
<keyword id="KW-0804">Transcription</keyword>
<keyword id="KW-0805">Transcription regulation</keyword>
<dbReference type="EMBL" id="M89919">
    <property type="protein sequence ID" value="AAA32483.1"/>
    <property type="molecule type" value="Genomic_DNA"/>
</dbReference>
<dbReference type="EMBL" id="AF158101">
    <property type="protein sequence ID" value="AAD42609.1"/>
    <property type="molecule type" value="Genomic_DNA"/>
</dbReference>
<dbReference type="PIR" id="C45731">
    <property type="entry name" value="C45731"/>
</dbReference>
<dbReference type="RefSeq" id="NP_049626.1">
    <property type="nucleotide sequence ID" value="NC_000866.4"/>
</dbReference>
<dbReference type="GeneID" id="1258672"/>
<dbReference type="KEGG" id="vg:1258672"/>
<dbReference type="OrthoDB" id="14967at10239"/>
<dbReference type="Proteomes" id="UP000009087">
    <property type="component" value="Segment"/>
</dbReference>
<dbReference type="GO" id="GO:0003690">
    <property type="term" value="F:double-stranded DNA binding"/>
    <property type="evidence" value="ECO:0000314"/>
    <property type="project" value="CACAO"/>
</dbReference>
<dbReference type="GO" id="GO:0003697">
    <property type="term" value="F:single-stranded DNA binding"/>
    <property type="evidence" value="ECO:0000314"/>
    <property type="project" value="CACAO"/>
</dbReference>
<dbReference type="InterPro" id="IPR020230">
    <property type="entry name" value="Tscrpt_reg_MotB"/>
</dbReference>
<dbReference type="Pfam" id="PF17613">
    <property type="entry name" value="motB"/>
    <property type="match status" value="1"/>
</dbReference>
<proteinExistence type="evidence at protein level"/>
<sequence length="162" mass="18217">MIINIGELARVSDKSRSKAAGKLVEVVSIQLKHGVKDEDSEVKVRIIPKDGKSKPQFGYVRAKFLESAFLKAVPAKGIETIDTSHVGVDFKWKLGQAIKFIAPCEFNFIKDDGRVVYTRAMCGYITDQWVEDGVKLYNVVFLGTYKVIPESWIKHYSNALYA</sequence>
<evidence type="ECO:0000269" key="1">
    <source>
    </source>
</evidence>
<evidence type="ECO:0000269" key="2">
    <source>
    </source>
</evidence>
<protein>
    <recommendedName>
        <fullName>Transcription regulatory protein motB</fullName>
    </recommendedName>
</protein>
<organism>
    <name type="scientific">Enterobacteria phage T4</name>
    <name type="common">Bacteriophage T4</name>
    <dbReference type="NCBI Taxonomy" id="10665"/>
    <lineage>
        <taxon>Viruses</taxon>
        <taxon>Duplodnaviria</taxon>
        <taxon>Heunggongvirae</taxon>
        <taxon>Uroviricota</taxon>
        <taxon>Caudoviricetes</taxon>
        <taxon>Straboviridae</taxon>
        <taxon>Tevenvirinae</taxon>
        <taxon>Tequatrovirus</taxon>
    </lineage>
</organism>
<accession>Q01437</accession>
<gene>
    <name type="primary">motB</name>
</gene>
<feature type="chain" id="PRO_0000164957" description="Transcription regulatory protein motB">
    <location>
        <begin position="1"/>
        <end position="162"/>
    </location>
</feature>
<name>MOTB_BPT4</name>
<organismHost>
    <name type="scientific">Escherichia coli</name>
    <dbReference type="NCBI Taxonomy" id="562"/>
</organismHost>
<reference key="1">
    <citation type="journal article" date="1992" name="J. Bacteriol.">
        <title>Sequence and characterization of the bacteriophage T4 comC alpha gene product, a possible transcription antitermination factor.</title>
        <authorList>
            <person name="Sanson B."/>
            <person name="Uzan M."/>
        </authorList>
    </citation>
    <scope>NUCLEOTIDE SEQUENCE [GENOMIC DNA]</scope>
</reference>
<reference key="2">
    <citation type="journal article" date="2003" name="Microbiol. Mol. Biol. Rev.">
        <title>Bacteriophage T4 genome.</title>
        <authorList>
            <person name="Miller E.S."/>
            <person name="Kutter E."/>
            <person name="Mosig G."/>
            <person name="Arisaka F."/>
            <person name="Kunisawa T."/>
            <person name="Ruger W."/>
        </authorList>
    </citation>
    <scope>NUCLEOTIDE SEQUENCE [LARGE SCALE GENOMIC DNA]</scope>
</reference>
<reference key="3">
    <citation type="journal article" date="1985" name="J. Biol. Chem.">
        <title>The T4 mot protein functions as part of a pre-replicative DNA-protein complex.</title>
        <authorList>
            <person name="Uzan M."/>
            <person name="d'Aubenton-Carafa Y."/>
            <person name="Favre R."/>
            <person name="de Franciscis V."/>
            <person name="Brody E."/>
        </authorList>
    </citation>
    <scope>FUNCTION</scope>
</reference>
<reference key="4">
    <citation type="journal article" date="2021" name="Nucleic Acids Res.">
        <title>A phage-encoded nucleoid associated protein compacts both host and phage DNA and derepresses H-NS silencing.</title>
        <authorList>
            <person name="Son B."/>
            <person name="Patterson-West J."/>
            <person name="Arroyo-Mendoza M."/>
            <person name="Ramachandran R."/>
            <person name="Iben J.R."/>
            <person name="Zhu J."/>
            <person name="Rao V."/>
            <person name="Dimitriadis E.K."/>
            <person name="Hinton D.M."/>
        </authorList>
    </citation>
    <scope>FUNCTION</scope>
    <scope>SUBUNIT</scope>
</reference>